<organism>
    <name type="scientific">Mycobacterium bovis (strain BCG / Pasteur 1173P2)</name>
    <dbReference type="NCBI Taxonomy" id="410289"/>
    <lineage>
        <taxon>Bacteria</taxon>
        <taxon>Bacillati</taxon>
        <taxon>Actinomycetota</taxon>
        <taxon>Actinomycetes</taxon>
        <taxon>Mycobacteriales</taxon>
        <taxon>Mycobacteriaceae</taxon>
        <taxon>Mycobacterium</taxon>
        <taxon>Mycobacterium tuberculosis complex</taxon>
    </lineage>
</organism>
<proteinExistence type="inferred from homology"/>
<feature type="chain" id="PRO_0000318378" description="Protein translocase subunit SecA 1">
    <location>
        <begin position="1"/>
        <end position="949"/>
    </location>
</feature>
<feature type="region of interest" description="Disordered" evidence="2">
    <location>
        <begin position="869"/>
        <end position="949"/>
    </location>
</feature>
<feature type="compositionally biased region" description="Basic and acidic residues" evidence="2">
    <location>
        <begin position="925"/>
        <end position="934"/>
    </location>
</feature>
<feature type="binding site" evidence="1">
    <location>
        <position position="86"/>
    </location>
    <ligand>
        <name>ATP</name>
        <dbReference type="ChEBI" id="CHEBI:30616"/>
    </ligand>
</feature>
<feature type="binding site" evidence="1">
    <location>
        <begin position="104"/>
        <end position="108"/>
    </location>
    <ligand>
        <name>ATP</name>
        <dbReference type="ChEBI" id="CHEBI:30616"/>
    </ligand>
</feature>
<feature type="binding site" evidence="1">
    <location>
        <position position="493"/>
    </location>
    <ligand>
        <name>ATP</name>
        <dbReference type="ChEBI" id="CHEBI:30616"/>
    </ligand>
</feature>
<protein>
    <recommendedName>
        <fullName evidence="1">Protein translocase subunit SecA 1</fullName>
        <ecNumber evidence="1">7.4.2.8</ecNumber>
    </recommendedName>
</protein>
<name>SECA1_MYCBP</name>
<dbReference type="EC" id="7.4.2.8" evidence="1"/>
<dbReference type="EMBL" id="AM408590">
    <property type="protein sequence ID" value="CAL73258.1"/>
    <property type="molecule type" value="Genomic_DNA"/>
</dbReference>
<dbReference type="SMR" id="A1KNP2"/>
<dbReference type="KEGG" id="mbb:BCG_3269c"/>
<dbReference type="HOGENOM" id="CLU_005314_3_0_11"/>
<dbReference type="Proteomes" id="UP000001472">
    <property type="component" value="Chromosome"/>
</dbReference>
<dbReference type="GO" id="GO:0031522">
    <property type="term" value="C:cell envelope Sec protein transport complex"/>
    <property type="evidence" value="ECO:0007669"/>
    <property type="project" value="TreeGrafter"/>
</dbReference>
<dbReference type="GO" id="GO:0005829">
    <property type="term" value="C:cytosol"/>
    <property type="evidence" value="ECO:0007669"/>
    <property type="project" value="TreeGrafter"/>
</dbReference>
<dbReference type="GO" id="GO:0005886">
    <property type="term" value="C:plasma membrane"/>
    <property type="evidence" value="ECO:0007669"/>
    <property type="project" value="UniProtKB-SubCell"/>
</dbReference>
<dbReference type="GO" id="GO:0005524">
    <property type="term" value="F:ATP binding"/>
    <property type="evidence" value="ECO:0007669"/>
    <property type="project" value="UniProtKB-UniRule"/>
</dbReference>
<dbReference type="GO" id="GO:0008564">
    <property type="term" value="F:protein-exporting ATPase activity"/>
    <property type="evidence" value="ECO:0007669"/>
    <property type="project" value="UniProtKB-EC"/>
</dbReference>
<dbReference type="GO" id="GO:0065002">
    <property type="term" value="P:intracellular protein transmembrane transport"/>
    <property type="evidence" value="ECO:0007669"/>
    <property type="project" value="UniProtKB-UniRule"/>
</dbReference>
<dbReference type="GO" id="GO:0017038">
    <property type="term" value="P:protein import"/>
    <property type="evidence" value="ECO:0007669"/>
    <property type="project" value="InterPro"/>
</dbReference>
<dbReference type="GO" id="GO:0006605">
    <property type="term" value="P:protein targeting"/>
    <property type="evidence" value="ECO:0007669"/>
    <property type="project" value="UniProtKB-UniRule"/>
</dbReference>
<dbReference type="GO" id="GO:0043952">
    <property type="term" value="P:protein transport by the Sec complex"/>
    <property type="evidence" value="ECO:0007669"/>
    <property type="project" value="TreeGrafter"/>
</dbReference>
<dbReference type="CDD" id="cd17928">
    <property type="entry name" value="DEXDc_SecA"/>
    <property type="match status" value="1"/>
</dbReference>
<dbReference type="CDD" id="cd18803">
    <property type="entry name" value="SF2_C_secA"/>
    <property type="match status" value="1"/>
</dbReference>
<dbReference type="FunFam" id="1.10.3060.10:FF:000002">
    <property type="entry name" value="Preprotein translocase subunit SecA"/>
    <property type="match status" value="1"/>
</dbReference>
<dbReference type="FunFam" id="3.40.50.300:FF:000113">
    <property type="entry name" value="Preprotein translocase subunit SecA"/>
    <property type="match status" value="1"/>
</dbReference>
<dbReference type="FunFam" id="3.40.50.300:FF:000334">
    <property type="entry name" value="Protein translocase subunit SecA"/>
    <property type="match status" value="1"/>
</dbReference>
<dbReference type="FunFam" id="3.90.1440.10:FF:000002">
    <property type="entry name" value="Protein translocase subunit SecA"/>
    <property type="match status" value="1"/>
</dbReference>
<dbReference type="Gene3D" id="1.10.3060.10">
    <property type="entry name" value="Helical scaffold and wing domains of SecA"/>
    <property type="match status" value="1"/>
</dbReference>
<dbReference type="Gene3D" id="3.40.50.300">
    <property type="entry name" value="P-loop containing nucleotide triphosphate hydrolases"/>
    <property type="match status" value="2"/>
</dbReference>
<dbReference type="Gene3D" id="3.90.1440.10">
    <property type="entry name" value="SecA, preprotein cross-linking domain"/>
    <property type="match status" value="1"/>
</dbReference>
<dbReference type="HAMAP" id="MF_01382">
    <property type="entry name" value="SecA"/>
    <property type="match status" value="1"/>
</dbReference>
<dbReference type="InterPro" id="IPR014001">
    <property type="entry name" value="Helicase_ATP-bd"/>
</dbReference>
<dbReference type="InterPro" id="IPR001650">
    <property type="entry name" value="Helicase_C-like"/>
</dbReference>
<dbReference type="InterPro" id="IPR027417">
    <property type="entry name" value="P-loop_NTPase"/>
</dbReference>
<dbReference type="InterPro" id="IPR000185">
    <property type="entry name" value="SecA"/>
</dbReference>
<dbReference type="InterPro" id="IPR020937">
    <property type="entry name" value="SecA_CS"/>
</dbReference>
<dbReference type="InterPro" id="IPR011115">
    <property type="entry name" value="SecA_DEAD"/>
</dbReference>
<dbReference type="InterPro" id="IPR014018">
    <property type="entry name" value="SecA_motor_DEAD"/>
</dbReference>
<dbReference type="InterPro" id="IPR011130">
    <property type="entry name" value="SecA_preprotein_X-link_dom"/>
</dbReference>
<dbReference type="InterPro" id="IPR044722">
    <property type="entry name" value="SecA_SF2_C"/>
</dbReference>
<dbReference type="InterPro" id="IPR011116">
    <property type="entry name" value="SecA_Wing/Scaffold"/>
</dbReference>
<dbReference type="InterPro" id="IPR036266">
    <property type="entry name" value="SecA_Wing/Scaffold_sf"/>
</dbReference>
<dbReference type="InterPro" id="IPR036670">
    <property type="entry name" value="SecA_X-link_sf"/>
</dbReference>
<dbReference type="NCBIfam" id="NF009538">
    <property type="entry name" value="PRK12904.1"/>
    <property type="match status" value="1"/>
</dbReference>
<dbReference type="NCBIfam" id="TIGR00963">
    <property type="entry name" value="secA"/>
    <property type="match status" value="1"/>
</dbReference>
<dbReference type="PANTHER" id="PTHR30612:SF0">
    <property type="entry name" value="CHLOROPLAST PROTEIN-TRANSPORTING ATPASE"/>
    <property type="match status" value="1"/>
</dbReference>
<dbReference type="PANTHER" id="PTHR30612">
    <property type="entry name" value="SECA INNER MEMBRANE COMPONENT OF SEC PROTEIN SECRETION SYSTEM"/>
    <property type="match status" value="1"/>
</dbReference>
<dbReference type="Pfam" id="PF21090">
    <property type="entry name" value="P-loop_SecA"/>
    <property type="match status" value="1"/>
</dbReference>
<dbReference type="Pfam" id="PF07517">
    <property type="entry name" value="SecA_DEAD"/>
    <property type="match status" value="1"/>
</dbReference>
<dbReference type="Pfam" id="PF01043">
    <property type="entry name" value="SecA_PP_bind"/>
    <property type="match status" value="1"/>
</dbReference>
<dbReference type="Pfam" id="PF07516">
    <property type="entry name" value="SecA_SW"/>
    <property type="match status" value="1"/>
</dbReference>
<dbReference type="PRINTS" id="PR00906">
    <property type="entry name" value="SECA"/>
</dbReference>
<dbReference type="SMART" id="SM00957">
    <property type="entry name" value="SecA_DEAD"/>
    <property type="match status" value="1"/>
</dbReference>
<dbReference type="SMART" id="SM00958">
    <property type="entry name" value="SecA_PP_bind"/>
    <property type="match status" value="1"/>
</dbReference>
<dbReference type="SUPFAM" id="SSF81886">
    <property type="entry name" value="Helical scaffold and wing domains of SecA"/>
    <property type="match status" value="1"/>
</dbReference>
<dbReference type="SUPFAM" id="SSF52540">
    <property type="entry name" value="P-loop containing nucleoside triphosphate hydrolases"/>
    <property type="match status" value="2"/>
</dbReference>
<dbReference type="SUPFAM" id="SSF81767">
    <property type="entry name" value="Pre-protein crosslinking domain of SecA"/>
    <property type="match status" value="1"/>
</dbReference>
<dbReference type="PROSITE" id="PS01312">
    <property type="entry name" value="SECA"/>
    <property type="match status" value="1"/>
</dbReference>
<dbReference type="PROSITE" id="PS51196">
    <property type="entry name" value="SECA_MOTOR_DEAD"/>
    <property type="match status" value="1"/>
</dbReference>
<evidence type="ECO:0000255" key="1">
    <source>
        <dbReference type="HAMAP-Rule" id="MF_01382"/>
    </source>
</evidence>
<evidence type="ECO:0000256" key="2">
    <source>
        <dbReference type="SAM" id="MobiDB-lite"/>
    </source>
</evidence>
<gene>
    <name evidence="1" type="primary">secA1</name>
    <name type="ordered locus">BCG_3269c</name>
</gene>
<sequence>MLSKLLRLGEGRMVKRLKKVADYVGTLSDDVEKLTDAELRAKTDEFKRRLADQKNPETLDDLLPEAFAVAREAAWRVLDQRPFDVQVMGAAALHLGNVAEMKTGEGKTLTCVLPAYLNALAGNGVHIVTVNDYLAKRDSEWMGRVHRFLGLQVGVILATMTPDERRVAYNADITYGTNNEFGFDYLRDNMAHSLDDLVQRGHHYAIVDEVDSILIDEARTPLIISGPADGASNWYTEFARLAPLMEKDVHYEVDLRKRTVGVHEKGVEFVEDQLGIDNLYEAANSPLVSYLNNALKAKELFSRDKDYIVRDGEVLIVDEFTGRVLIGRRYNEGMHQAIEAKEHVEIKAENQTLATITLQNYFRLYDKLAGMTGTAQTEAAELHEIYKLGVVSIPTNMPMIREDQSDLIYKTEEAKYIAVVDDVAERYAKGQPVLIGTTSVERSEYLSRQFTKRRIPHNVLNAKYHEQEATIIAVAGRRGGVTVATNMAGRGTDIVLGGNVDFLTDQRLRERGLDPVETPEEYEAAWHSELPIVKEEASKEAKEVIEAGGLYVLGTERHESRRIDNQLRGRSGRQGDPGESRFYLSLGDELMRRFNGAALETLLTRLNLPDDVPIEAKMVTRAIKSAQTQVEQQNFEVRKNVLKYDEVMNQQRKVIYAERRRILEGENLKDQALDMVRDVITAYVDGATGEGYAEDWDLDALWTALKTLYPVGITADSLTRKDHEFERDDLTREELLEALLKDAERAYAAREAELEEIAGEGAMRQLERNVLLNVIDRKWREHLYEMDYLKEGIGLRAMAQRDPLVEYQREGYDMFMAMLDGMKEESVGFLFNVTVEAVPAPPVAPAAEPAELAEFAAAAAAAAQQRSAVDGGARERAPSALRAKGVASESPALTYSGPAEDGSAQVQRNGGGAHKTPAGVPAGASRRERREAARRQGRGAKPPKSVKKR</sequence>
<keyword id="KW-0067">ATP-binding</keyword>
<keyword id="KW-1003">Cell membrane</keyword>
<keyword id="KW-0963">Cytoplasm</keyword>
<keyword id="KW-0472">Membrane</keyword>
<keyword id="KW-0547">Nucleotide-binding</keyword>
<keyword id="KW-0653">Protein transport</keyword>
<keyword id="KW-1278">Translocase</keyword>
<keyword id="KW-0811">Translocation</keyword>
<keyword id="KW-0813">Transport</keyword>
<accession>A1KNP2</accession>
<comment type="function">
    <text evidence="1">Part of the Sec protein translocase complex. Interacts with the SecYEG preprotein conducting channel. Has a central role in coupling the hydrolysis of ATP to the transfer of proteins into and across the cell membrane, serving as an ATP-driven molecular motor driving the stepwise translocation of polypeptide chains across the membrane.</text>
</comment>
<comment type="catalytic activity">
    <reaction evidence="1">
        <text>ATP + H2O + cellular proteinSide 1 = ADP + phosphate + cellular proteinSide 2.</text>
        <dbReference type="EC" id="7.4.2.8"/>
    </reaction>
</comment>
<comment type="subunit">
    <text evidence="1">Monomer and homodimer. Part of the essential Sec protein translocation apparatus which comprises SecA, SecYEG and auxiliary proteins SecDF. Other proteins may also be involved.</text>
</comment>
<comment type="subcellular location">
    <subcellularLocation>
        <location evidence="1">Cell membrane</location>
        <topology evidence="1">Peripheral membrane protein</topology>
        <orientation evidence="1">Cytoplasmic side</orientation>
    </subcellularLocation>
    <subcellularLocation>
        <location evidence="1">Cytoplasm</location>
    </subcellularLocation>
    <text evidence="1">Distribution is 50-50.</text>
</comment>
<comment type="similarity">
    <text evidence="1">Belongs to the SecA family.</text>
</comment>
<reference key="1">
    <citation type="journal article" date="2007" name="Proc. Natl. Acad. Sci. U.S.A.">
        <title>Genome plasticity of BCG and impact on vaccine efficacy.</title>
        <authorList>
            <person name="Brosch R."/>
            <person name="Gordon S.V."/>
            <person name="Garnier T."/>
            <person name="Eiglmeier K."/>
            <person name="Frigui W."/>
            <person name="Valenti P."/>
            <person name="Dos Santos S."/>
            <person name="Duthoy S."/>
            <person name="Lacroix C."/>
            <person name="Garcia-Pelayo C."/>
            <person name="Inwald J.K."/>
            <person name="Golby P."/>
            <person name="Garcia J.N."/>
            <person name="Hewinson R.G."/>
            <person name="Behr M.A."/>
            <person name="Quail M.A."/>
            <person name="Churcher C."/>
            <person name="Barrell B.G."/>
            <person name="Parkhill J."/>
            <person name="Cole S.T."/>
        </authorList>
    </citation>
    <scope>NUCLEOTIDE SEQUENCE [LARGE SCALE GENOMIC DNA]</scope>
    <source>
        <strain>BCG / Pasteur 1173P2</strain>
    </source>
</reference>